<protein>
    <recommendedName>
        <fullName evidence="1">2,3-bisphosphoglycerate-dependent phosphoglycerate mutase</fullName>
        <shortName evidence="1">BPG-dependent PGAM</shortName>
        <shortName evidence="1">PGAM</shortName>
        <shortName evidence="1">Phosphoglyceromutase</shortName>
        <shortName evidence="1">dPGM</shortName>
        <ecNumber evidence="1">5.4.2.11</ecNumber>
    </recommendedName>
</protein>
<keyword id="KW-0312">Gluconeogenesis</keyword>
<keyword id="KW-0324">Glycolysis</keyword>
<keyword id="KW-0413">Isomerase</keyword>
<organism>
    <name type="scientific">Bacillus cereus (strain G9842)</name>
    <dbReference type="NCBI Taxonomy" id="405531"/>
    <lineage>
        <taxon>Bacteria</taxon>
        <taxon>Bacillati</taxon>
        <taxon>Bacillota</taxon>
        <taxon>Bacilli</taxon>
        <taxon>Bacillales</taxon>
        <taxon>Bacillaceae</taxon>
        <taxon>Bacillus</taxon>
        <taxon>Bacillus cereus group</taxon>
    </lineage>
</organism>
<feature type="chain" id="PRO_1000135916" description="2,3-bisphosphoglycerate-dependent phosphoglycerate mutase">
    <location>
        <begin position="1"/>
        <end position="245"/>
    </location>
</feature>
<feature type="active site" description="Tele-phosphohistidine intermediate" evidence="1">
    <location>
        <position position="9"/>
    </location>
</feature>
<feature type="active site" description="Proton donor/acceptor" evidence="1">
    <location>
        <position position="87"/>
    </location>
</feature>
<feature type="binding site" evidence="1">
    <location>
        <begin position="8"/>
        <end position="15"/>
    </location>
    <ligand>
        <name>substrate</name>
    </ligand>
</feature>
<feature type="binding site" evidence="1">
    <location>
        <begin position="21"/>
        <end position="22"/>
    </location>
    <ligand>
        <name>substrate</name>
    </ligand>
</feature>
<feature type="binding site" evidence="1">
    <location>
        <position position="60"/>
    </location>
    <ligand>
        <name>substrate</name>
    </ligand>
</feature>
<feature type="binding site" evidence="1">
    <location>
        <begin position="87"/>
        <end position="90"/>
    </location>
    <ligand>
        <name>substrate</name>
    </ligand>
</feature>
<feature type="binding site" evidence="1">
    <location>
        <position position="98"/>
    </location>
    <ligand>
        <name>substrate</name>
    </ligand>
</feature>
<feature type="binding site" evidence="1">
    <location>
        <begin position="114"/>
        <end position="115"/>
    </location>
    <ligand>
        <name>substrate</name>
    </ligand>
</feature>
<feature type="binding site" evidence="1">
    <location>
        <begin position="183"/>
        <end position="184"/>
    </location>
    <ligand>
        <name>substrate</name>
    </ligand>
</feature>
<feature type="site" description="Transition state stabilizer" evidence="1">
    <location>
        <position position="182"/>
    </location>
</feature>
<sequence length="245" mass="28366">MIKLVLIRHGQSLWNLENRFTGWTDVDLSENGLSEAREAGAILKKNRYTFDVAYTSVLKRAIRTLWIVLHEMDLTWVPIHKSWKLNERHYGALQGLNKDETAQKYGEEQVHIWRRSVDVRPPALTEDDPRYEATDPRYKTLKKGEFPLTECLEDTEKRVLAYWHSEIAPILKNGNKVIISSHGNTIRSLVKYLDNLSSDGVVSLNIPTSIPLVYELDENLRPIRHYYLSMDGEVPEGEIPKHISF</sequence>
<accession>B7IX37</accession>
<proteinExistence type="inferred from homology"/>
<gene>
    <name evidence="1" type="primary">gpmA</name>
    <name type="ordered locus">BCG9842_B2893</name>
</gene>
<comment type="function">
    <text evidence="1">Catalyzes the interconversion of 2-phosphoglycerate and 3-phosphoglycerate.</text>
</comment>
<comment type="catalytic activity">
    <reaction evidence="1">
        <text>(2R)-2-phosphoglycerate = (2R)-3-phosphoglycerate</text>
        <dbReference type="Rhea" id="RHEA:15901"/>
        <dbReference type="ChEBI" id="CHEBI:58272"/>
        <dbReference type="ChEBI" id="CHEBI:58289"/>
        <dbReference type="EC" id="5.4.2.11"/>
    </reaction>
</comment>
<comment type="pathway">
    <text evidence="1">Carbohydrate degradation; glycolysis; pyruvate from D-glyceraldehyde 3-phosphate: step 3/5.</text>
</comment>
<comment type="similarity">
    <text evidence="1">Belongs to the phosphoglycerate mutase family. BPG-dependent PGAM subfamily.</text>
</comment>
<name>GPMA_BACC2</name>
<reference key="1">
    <citation type="submission" date="2008-10" db="EMBL/GenBank/DDBJ databases">
        <title>Genome sequence of Bacillus cereus G9842.</title>
        <authorList>
            <person name="Dodson R.J."/>
            <person name="Durkin A.S."/>
            <person name="Rosovitz M.J."/>
            <person name="Rasko D.A."/>
            <person name="Hoffmaster A."/>
            <person name="Ravel J."/>
            <person name="Sutton G."/>
        </authorList>
    </citation>
    <scope>NUCLEOTIDE SEQUENCE [LARGE SCALE GENOMIC DNA]</scope>
    <source>
        <strain>G9842</strain>
    </source>
</reference>
<dbReference type="EC" id="5.4.2.11" evidence="1"/>
<dbReference type="EMBL" id="CP001186">
    <property type="protein sequence ID" value="ACK96831.1"/>
    <property type="molecule type" value="Genomic_DNA"/>
</dbReference>
<dbReference type="RefSeq" id="WP_000594159.1">
    <property type="nucleotide sequence ID" value="NC_011772.1"/>
</dbReference>
<dbReference type="SMR" id="B7IX37"/>
<dbReference type="KEGG" id="bcg:BCG9842_B2893"/>
<dbReference type="HOGENOM" id="CLU_033323_1_1_9"/>
<dbReference type="UniPathway" id="UPA00109">
    <property type="reaction ID" value="UER00186"/>
</dbReference>
<dbReference type="Proteomes" id="UP000006744">
    <property type="component" value="Chromosome"/>
</dbReference>
<dbReference type="GO" id="GO:0004619">
    <property type="term" value="F:phosphoglycerate mutase activity"/>
    <property type="evidence" value="ECO:0007669"/>
    <property type="project" value="UniProtKB-EC"/>
</dbReference>
<dbReference type="GO" id="GO:0006094">
    <property type="term" value="P:gluconeogenesis"/>
    <property type="evidence" value="ECO:0007669"/>
    <property type="project" value="UniProtKB-UniRule"/>
</dbReference>
<dbReference type="GO" id="GO:0006096">
    <property type="term" value="P:glycolytic process"/>
    <property type="evidence" value="ECO:0007669"/>
    <property type="project" value="UniProtKB-UniRule"/>
</dbReference>
<dbReference type="CDD" id="cd07067">
    <property type="entry name" value="HP_PGM_like"/>
    <property type="match status" value="1"/>
</dbReference>
<dbReference type="FunFam" id="3.40.50.1240:FF:000003">
    <property type="entry name" value="2,3-bisphosphoglycerate-dependent phosphoglycerate mutase"/>
    <property type="match status" value="1"/>
</dbReference>
<dbReference type="Gene3D" id="3.40.50.1240">
    <property type="entry name" value="Phosphoglycerate mutase-like"/>
    <property type="match status" value="1"/>
</dbReference>
<dbReference type="HAMAP" id="MF_01039">
    <property type="entry name" value="PGAM_GpmA"/>
    <property type="match status" value="1"/>
</dbReference>
<dbReference type="InterPro" id="IPR013078">
    <property type="entry name" value="His_Pase_superF_clade-1"/>
</dbReference>
<dbReference type="InterPro" id="IPR029033">
    <property type="entry name" value="His_PPase_superfam"/>
</dbReference>
<dbReference type="InterPro" id="IPR001345">
    <property type="entry name" value="PG/BPGM_mutase_AS"/>
</dbReference>
<dbReference type="InterPro" id="IPR005952">
    <property type="entry name" value="Phosphogly_mut1"/>
</dbReference>
<dbReference type="NCBIfam" id="TIGR01258">
    <property type="entry name" value="pgm_1"/>
    <property type="match status" value="1"/>
</dbReference>
<dbReference type="NCBIfam" id="NF010713">
    <property type="entry name" value="PRK14115.1"/>
    <property type="match status" value="1"/>
</dbReference>
<dbReference type="PANTHER" id="PTHR11931">
    <property type="entry name" value="PHOSPHOGLYCERATE MUTASE"/>
    <property type="match status" value="1"/>
</dbReference>
<dbReference type="Pfam" id="PF00300">
    <property type="entry name" value="His_Phos_1"/>
    <property type="match status" value="1"/>
</dbReference>
<dbReference type="PIRSF" id="PIRSF000709">
    <property type="entry name" value="6PFK_2-Ptase"/>
    <property type="match status" value="1"/>
</dbReference>
<dbReference type="SMART" id="SM00855">
    <property type="entry name" value="PGAM"/>
    <property type="match status" value="1"/>
</dbReference>
<dbReference type="SUPFAM" id="SSF53254">
    <property type="entry name" value="Phosphoglycerate mutase-like"/>
    <property type="match status" value="1"/>
</dbReference>
<dbReference type="PROSITE" id="PS00175">
    <property type="entry name" value="PG_MUTASE"/>
    <property type="match status" value="1"/>
</dbReference>
<evidence type="ECO:0000255" key="1">
    <source>
        <dbReference type="HAMAP-Rule" id="MF_01039"/>
    </source>
</evidence>